<keyword id="KW-0963">Cytoplasm</keyword>
<keyword id="KW-0342">GTP-binding</keyword>
<keyword id="KW-0378">Hydrolase</keyword>
<keyword id="KW-0460">Magnesium</keyword>
<keyword id="KW-0479">Metal-binding</keyword>
<keyword id="KW-0547">Nucleotide-binding</keyword>
<keyword id="KW-0630">Potassium</keyword>
<keyword id="KW-0819">tRNA processing</keyword>
<organism>
    <name type="scientific">Listeria innocua serovar 6a (strain ATCC BAA-680 / CLIP 11262)</name>
    <dbReference type="NCBI Taxonomy" id="272626"/>
    <lineage>
        <taxon>Bacteria</taxon>
        <taxon>Bacillati</taxon>
        <taxon>Bacillota</taxon>
        <taxon>Bacilli</taxon>
        <taxon>Bacillales</taxon>
        <taxon>Listeriaceae</taxon>
        <taxon>Listeria</taxon>
    </lineage>
</organism>
<name>MNME_LISIN</name>
<protein>
    <recommendedName>
        <fullName evidence="1">tRNA modification GTPase MnmE</fullName>
        <ecNumber evidence="1">3.6.-.-</ecNumber>
    </recommendedName>
</protein>
<reference key="1">
    <citation type="journal article" date="2001" name="Science">
        <title>Comparative genomics of Listeria species.</title>
        <authorList>
            <person name="Glaser P."/>
            <person name="Frangeul L."/>
            <person name="Buchrieser C."/>
            <person name="Rusniok C."/>
            <person name="Amend A."/>
            <person name="Baquero F."/>
            <person name="Berche P."/>
            <person name="Bloecker H."/>
            <person name="Brandt P."/>
            <person name="Chakraborty T."/>
            <person name="Charbit A."/>
            <person name="Chetouani F."/>
            <person name="Couve E."/>
            <person name="de Daruvar A."/>
            <person name="Dehoux P."/>
            <person name="Domann E."/>
            <person name="Dominguez-Bernal G."/>
            <person name="Duchaud E."/>
            <person name="Durant L."/>
            <person name="Dussurget O."/>
            <person name="Entian K.-D."/>
            <person name="Fsihi H."/>
            <person name="Garcia-del Portillo F."/>
            <person name="Garrido P."/>
            <person name="Gautier L."/>
            <person name="Goebel W."/>
            <person name="Gomez-Lopez N."/>
            <person name="Hain T."/>
            <person name="Hauf J."/>
            <person name="Jackson D."/>
            <person name="Jones L.-M."/>
            <person name="Kaerst U."/>
            <person name="Kreft J."/>
            <person name="Kuhn M."/>
            <person name="Kunst F."/>
            <person name="Kurapkat G."/>
            <person name="Madueno E."/>
            <person name="Maitournam A."/>
            <person name="Mata Vicente J."/>
            <person name="Ng E."/>
            <person name="Nedjari H."/>
            <person name="Nordsiek G."/>
            <person name="Novella S."/>
            <person name="de Pablos B."/>
            <person name="Perez-Diaz J.-C."/>
            <person name="Purcell R."/>
            <person name="Remmel B."/>
            <person name="Rose M."/>
            <person name="Schlueter T."/>
            <person name="Simoes N."/>
            <person name="Tierrez A."/>
            <person name="Vazquez-Boland J.-A."/>
            <person name="Voss H."/>
            <person name="Wehland J."/>
            <person name="Cossart P."/>
        </authorList>
    </citation>
    <scope>NUCLEOTIDE SEQUENCE [LARGE SCALE GENOMIC DNA]</scope>
    <source>
        <strain>ATCC BAA-680 / CLIP 11262</strain>
    </source>
</reference>
<accession>Q926U7</accession>
<evidence type="ECO:0000255" key="1">
    <source>
        <dbReference type="HAMAP-Rule" id="MF_00379"/>
    </source>
</evidence>
<proteinExistence type="inferred from homology"/>
<comment type="function">
    <text evidence="1">Exhibits a very high intrinsic GTPase hydrolysis rate. Involved in the addition of a carboxymethylaminomethyl (cmnm) group at the wobble position (U34) of certain tRNAs, forming tRNA-cmnm(5)s(2)U34.</text>
</comment>
<comment type="cofactor">
    <cofactor evidence="1">
        <name>K(+)</name>
        <dbReference type="ChEBI" id="CHEBI:29103"/>
    </cofactor>
    <text evidence="1">Binds 1 potassium ion per subunit.</text>
</comment>
<comment type="subunit">
    <text evidence="1">Homodimer. Heterotetramer of two MnmE and two MnmG subunits.</text>
</comment>
<comment type="subcellular location">
    <subcellularLocation>
        <location evidence="1">Cytoplasm</location>
    </subcellularLocation>
</comment>
<comment type="similarity">
    <text evidence="1">Belongs to the TRAFAC class TrmE-Era-EngA-EngB-Septin-like GTPase superfamily. TrmE GTPase family.</text>
</comment>
<dbReference type="EC" id="3.6.-.-" evidence="1"/>
<dbReference type="EMBL" id="AL596174">
    <property type="protein sequence ID" value="CAC98168.1"/>
    <property type="molecule type" value="Genomic_DNA"/>
</dbReference>
<dbReference type="PIR" id="AH1799">
    <property type="entry name" value="AH1799"/>
</dbReference>
<dbReference type="RefSeq" id="WP_010991466.1">
    <property type="nucleotide sequence ID" value="NC_003212.1"/>
</dbReference>
<dbReference type="SMR" id="Q926U7"/>
<dbReference type="STRING" id="272626.gene:17567329"/>
<dbReference type="GeneID" id="93236220"/>
<dbReference type="KEGG" id="lin:lin2943"/>
<dbReference type="eggNOG" id="COG0486">
    <property type="taxonomic scope" value="Bacteria"/>
</dbReference>
<dbReference type="HOGENOM" id="CLU_019624_4_1_9"/>
<dbReference type="OrthoDB" id="9805918at2"/>
<dbReference type="Proteomes" id="UP000002513">
    <property type="component" value="Chromosome"/>
</dbReference>
<dbReference type="GO" id="GO:0005829">
    <property type="term" value="C:cytosol"/>
    <property type="evidence" value="ECO:0007669"/>
    <property type="project" value="TreeGrafter"/>
</dbReference>
<dbReference type="GO" id="GO:0005525">
    <property type="term" value="F:GTP binding"/>
    <property type="evidence" value="ECO:0007669"/>
    <property type="project" value="UniProtKB-UniRule"/>
</dbReference>
<dbReference type="GO" id="GO:0003924">
    <property type="term" value="F:GTPase activity"/>
    <property type="evidence" value="ECO:0007669"/>
    <property type="project" value="UniProtKB-UniRule"/>
</dbReference>
<dbReference type="GO" id="GO:0046872">
    <property type="term" value="F:metal ion binding"/>
    <property type="evidence" value="ECO:0007669"/>
    <property type="project" value="UniProtKB-KW"/>
</dbReference>
<dbReference type="GO" id="GO:0030488">
    <property type="term" value="P:tRNA methylation"/>
    <property type="evidence" value="ECO:0007669"/>
    <property type="project" value="TreeGrafter"/>
</dbReference>
<dbReference type="GO" id="GO:0002098">
    <property type="term" value="P:tRNA wobble uridine modification"/>
    <property type="evidence" value="ECO:0007669"/>
    <property type="project" value="TreeGrafter"/>
</dbReference>
<dbReference type="CDD" id="cd04164">
    <property type="entry name" value="trmE"/>
    <property type="match status" value="1"/>
</dbReference>
<dbReference type="CDD" id="cd14858">
    <property type="entry name" value="TrmE_N"/>
    <property type="match status" value="1"/>
</dbReference>
<dbReference type="FunFam" id="3.30.1360.120:FF:000003">
    <property type="entry name" value="tRNA modification GTPase MnmE"/>
    <property type="match status" value="1"/>
</dbReference>
<dbReference type="FunFam" id="3.40.50.300:FF:000494">
    <property type="entry name" value="tRNA modification GTPase MnmE"/>
    <property type="match status" value="1"/>
</dbReference>
<dbReference type="Gene3D" id="3.40.50.300">
    <property type="entry name" value="P-loop containing nucleotide triphosphate hydrolases"/>
    <property type="match status" value="1"/>
</dbReference>
<dbReference type="Gene3D" id="3.30.1360.120">
    <property type="entry name" value="Probable tRNA modification gtpase trme, domain 1"/>
    <property type="match status" value="1"/>
</dbReference>
<dbReference type="Gene3D" id="1.20.120.430">
    <property type="entry name" value="tRNA modification GTPase MnmE domain 2"/>
    <property type="match status" value="1"/>
</dbReference>
<dbReference type="HAMAP" id="MF_00379">
    <property type="entry name" value="GTPase_MnmE"/>
    <property type="match status" value="1"/>
</dbReference>
<dbReference type="InterPro" id="IPR031168">
    <property type="entry name" value="G_TrmE"/>
</dbReference>
<dbReference type="InterPro" id="IPR006073">
    <property type="entry name" value="GTP-bd"/>
</dbReference>
<dbReference type="InterPro" id="IPR018948">
    <property type="entry name" value="GTP-bd_TrmE_N"/>
</dbReference>
<dbReference type="InterPro" id="IPR004520">
    <property type="entry name" value="GTPase_MnmE"/>
</dbReference>
<dbReference type="InterPro" id="IPR027368">
    <property type="entry name" value="MnmE_dom2"/>
</dbReference>
<dbReference type="InterPro" id="IPR025867">
    <property type="entry name" value="MnmE_helical"/>
</dbReference>
<dbReference type="InterPro" id="IPR027417">
    <property type="entry name" value="P-loop_NTPase"/>
</dbReference>
<dbReference type="InterPro" id="IPR005225">
    <property type="entry name" value="Small_GTP-bd"/>
</dbReference>
<dbReference type="InterPro" id="IPR027266">
    <property type="entry name" value="TrmE/GcvT_dom1"/>
</dbReference>
<dbReference type="NCBIfam" id="TIGR00450">
    <property type="entry name" value="mnmE_trmE_thdF"/>
    <property type="match status" value="1"/>
</dbReference>
<dbReference type="NCBIfam" id="NF003661">
    <property type="entry name" value="PRK05291.1-3"/>
    <property type="match status" value="1"/>
</dbReference>
<dbReference type="NCBIfam" id="TIGR00231">
    <property type="entry name" value="small_GTP"/>
    <property type="match status" value="1"/>
</dbReference>
<dbReference type="PANTHER" id="PTHR42714">
    <property type="entry name" value="TRNA MODIFICATION GTPASE GTPBP3"/>
    <property type="match status" value="1"/>
</dbReference>
<dbReference type="PANTHER" id="PTHR42714:SF2">
    <property type="entry name" value="TRNA MODIFICATION GTPASE GTPBP3, MITOCHONDRIAL"/>
    <property type="match status" value="1"/>
</dbReference>
<dbReference type="Pfam" id="PF01926">
    <property type="entry name" value="MMR_HSR1"/>
    <property type="match status" value="1"/>
</dbReference>
<dbReference type="Pfam" id="PF12631">
    <property type="entry name" value="MnmE_helical"/>
    <property type="match status" value="1"/>
</dbReference>
<dbReference type="Pfam" id="PF10396">
    <property type="entry name" value="TrmE_N"/>
    <property type="match status" value="1"/>
</dbReference>
<dbReference type="SUPFAM" id="SSF52540">
    <property type="entry name" value="P-loop containing nucleoside triphosphate hydrolases"/>
    <property type="match status" value="1"/>
</dbReference>
<dbReference type="SUPFAM" id="SSF116878">
    <property type="entry name" value="TrmE connector domain"/>
    <property type="match status" value="1"/>
</dbReference>
<dbReference type="PROSITE" id="PS51709">
    <property type="entry name" value="G_TRME"/>
    <property type="match status" value="1"/>
</dbReference>
<gene>
    <name evidence="1" type="primary">mnmE</name>
    <name evidence="1" type="synonym">trmE</name>
    <name type="ordered locus">lin2943</name>
</gene>
<feature type="chain" id="PRO_0000188888" description="tRNA modification GTPase MnmE">
    <location>
        <begin position="1"/>
        <end position="457"/>
    </location>
</feature>
<feature type="domain" description="TrmE-type G">
    <location>
        <begin position="219"/>
        <end position="378"/>
    </location>
</feature>
<feature type="binding site" evidence="1">
    <location>
        <position position="22"/>
    </location>
    <ligand>
        <name>(6S)-5-formyl-5,6,7,8-tetrahydrofolate</name>
        <dbReference type="ChEBI" id="CHEBI:57457"/>
    </ligand>
</feature>
<feature type="binding site" evidence="1">
    <location>
        <position position="83"/>
    </location>
    <ligand>
        <name>(6S)-5-formyl-5,6,7,8-tetrahydrofolate</name>
        <dbReference type="ChEBI" id="CHEBI:57457"/>
    </ligand>
</feature>
<feature type="binding site" evidence="1">
    <location>
        <position position="122"/>
    </location>
    <ligand>
        <name>(6S)-5-formyl-5,6,7,8-tetrahydrofolate</name>
        <dbReference type="ChEBI" id="CHEBI:57457"/>
    </ligand>
</feature>
<feature type="binding site" evidence="1">
    <location>
        <begin position="229"/>
        <end position="234"/>
    </location>
    <ligand>
        <name>GTP</name>
        <dbReference type="ChEBI" id="CHEBI:37565"/>
    </ligand>
</feature>
<feature type="binding site" evidence="1">
    <location>
        <position position="229"/>
    </location>
    <ligand>
        <name>K(+)</name>
        <dbReference type="ChEBI" id="CHEBI:29103"/>
    </ligand>
</feature>
<feature type="binding site" evidence="1">
    <location>
        <position position="233"/>
    </location>
    <ligand>
        <name>Mg(2+)</name>
        <dbReference type="ChEBI" id="CHEBI:18420"/>
    </ligand>
</feature>
<feature type="binding site" evidence="1">
    <location>
        <begin position="248"/>
        <end position="254"/>
    </location>
    <ligand>
        <name>GTP</name>
        <dbReference type="ChEBI" id="CHEBI:37565"/>
    </ligand>
</feature>
<feature type="binding site" evidence="1">
    <location>
        <position position="248"/>
    </location>
    <ligand>
        <name>K(+)</name>
        <dbReference type="ChEBI" id="CHEBI:29103"/>
    </ligand>
</feature>
<feature type="binding site" evidence="1">
    <location>
        <position position="250"/>
    </location>
    <ligand>
        <name>K(+)</name>
        <dbReference type="ChEBI" id="CHEBI:29103"/>
    </ligand>
</feature>
<feature type="binding site" evidence="1">
    <location>
        <position position="253"/>
    </location>
    <ligand>
        <name>K(+)</name>
        <dbReference type="ChEBI" id="CHEBI:29103"/>
    </ligand>
</feature>
<feature type="binding site" evidence="1">
    <location>
        <position position="254"/>
    </location>
    <ligand>
        <name>Mg(2+)</name>
        <dbReference type="ChEBI" id="CHEBI:18420"/>
    </ligand>
</feature>
<feature type="binding site" evidence="1">
    <location>
        <begin position="273"/>
        <end position="276"/>
    </location>
    <ligand>
        <name>GTP</name>
        <dbReference type="ChEBI" id="CHEBI:37565"/>
    </ligand>
</feature>
<feature type="binding site" evidence="1">
    <location>
        <position position="457"/>
    </location>
    <ligand>
        <name>(6S)-5-formyl-5,6,7,8-tetrahydrofolate</name>
        <dbReference type="ChEBI" id="CHEBI:57457"/>
    </ligand>
</feature>
<sequence>MEFDTIAAISTPPGEGAIAIIRLSGPEAIQIADRIFYAKNSLSEAESHTIHYGHIKEDGEVIEEVMVTVMRAPRTFTREDVVEINAHGGIVSVNRVLQLLLRNGANLAEPGEFTKRAFLNGRIDLSQAEAVMDLIRAKTDRAMGVAIRQMDGNLSRLIRNLRQEILDALAQVEVNIDYPEYDDVEEMTQRMLLEKTELVRASVEQLLQTASQGKILREGLATAIIGRPNVGKSSLLNQLIQEEKAIVTDIAGTTRDIIEEYVNVRGVPLRLIDTAGIRETEDIVEKIGVERSRKALADADFILLVLNQNEELTVEDEALFEAAAGHNYVVVLNKTDLETKLDINRVRELAGENPIVSTSLVNDEGLEALEEAIKALFFAGDIDAGDATYVSNVRHIALLHQALEALNGVTTGIQLGMPVDIVQIDMTRAWDLLGEITGDSVQDELLDQLFNQFCLGK</sequence>